<proteinExistence type="inferred from homology"/>
<sequence length="447" mass="50077">MTTAQFICLSLGSNLGNRFEIFRKAFALLKELEIEDLQSSIILETKALLLPGSPKEWDLPFFNSVLIGKTTLSPKQLLSGVKQIERRLGRDVNALPWSPRVLDIDILLYGDENHQQEDVKIPHERITERPFLLSLIASLCPTRIFHKPGSEYHLKSFGEIAHLLPCPQEMILNSFSPNTLLMGVVNVTDNSISDEGLYLEASKAVAHAEKLFAQGASVIDFGGQATNPKVQQLLNVEQEWSRLEPVLKLLAEKWAGRRQYPDISLDTFYPEIIKRALEIYPIRWINDVSGGSKEMAEIARDANLLLVINHSCSLPPRPDKTLAFTTCASDQLLSWGEKQIEAFVALGLRQDQIIFDPGIGFGTTQIQALNVLHKMKKFRKLGCATLVGHSRKSCFSLLGKYDAKDRDWETVSLSVLLQQQGVNYLRVHDVEANQRVLSAAAWSGVHV</sequence>
<organism>
    <name type="scientific">Chlamydia caviae (strain ATCC VR-813 / DSM 19441 / 03DC25 / GPIC)</name>
    <name type="common">Chlamydophila caviae</name>
    <dbReference type="NCBI Taxonomy" id="227941"/>
    <lineage>
        <taxon>Bacteria</taxon>
        <taxon>Pseudomonadati</taxon>
        <taxon>Chlamydiota</taxon>
        <taxon>Chlamydiia</taxon>
        <taxon>Chlamydiales</taxon>
        <taxon>Chlamydiaceae</taxon>
        <taxon>Chlamydia/Chlamydophila group</taxon>
        <taxon>Chlamydia</taxon>
    </lineage>
</organism>
<feature type="chain" id="PRO_0000168238" description="Folate synthesis bifunctional protein">
    <location>
        <begin position="1"/>
        <end position="447"/>
    </location>
</feature>
<feature type="domain" description="Pterin-binding" evidence="3">
    <location>
        <begin position="179"/>
        <end position="438"/>
    </location>
</feature>
<feature type="region of interest" description="HPPK">
    <location>
        <begin position="1"/>
        <end position="165"/>
    </location>
</feature>
<feature type="region of interest" description="DHPS">
    <location>
        <begin position="181"/>
        <end position="447"/>
    </location>
</feature>
<feature type="binding site" evidence="2">
    <location>
        <position position="186"/>
    </location>
    <ligand>
        <name>Mg(2+)</name>
        <dbReference type="ChEBI" id="CHEBI:18420"/>
    </ligand>
</feature>
<feature type="binding site" evidence="1">
    <location>
        <position position="226"/>
    </location>
    <ligand>
        <name>(7,8-dihydropterin-6-yl)methyl diphosphate</name>
        <dbReference type="ChEBI" id="CHEBI:72950"/>
    </ligand>
</feature>
<feature type="binding site" evidence="1">
    <location>
        <position position="266"/>
    </location>
    <ligand>
        <name>(7,8-dihydropterin-6-yl)methyl diphosphate</name>
        <dbReference type="ChEBI" id="CHEBI:72950"/>
    </ligand>
</feature>
<feature type="binding site" evidence="1">
    <location>
        <position position="286"/>
    </location>
    <ligand>
        <name>(7,8-dihydropterin-6-yl)methyl diphosphate</name>
        <dbReference type="ChEBI" id="CHEBI:72950"/>
    </ligand>
</feature>
<feature type="binding site" evidence="1">
    <location>
        <position position="356"/>
    </location>
    <ligand>
        <name>(7,8-dihydropterin-6-yl)methyl diphosphate</name>
        <dbReference type="ChEBI" id="CHEBI:72950"/>
    </ligand>
</feature>
<feature type="binding site" evidence="1">
    <location>
        <position position="392"/>
    </location>
    <ligand>
        <name>(7,8-dihydropterin-6-yl)methyl diphosphate</name>
        <dbReference type="ChEBI" id="CHEBI:72950"/>
    </ligand>
</feature>
<feature type="binding site" evidence="1">
    <location>
        <begin position="426"/>
        <end position="428"/>
    </location>
    <ligand>
        <name>(7,8-dihydropterin-6-yl)methyl diphosphate</name>
        <dbReference type="ChEBI" id="CHEBI:72950"/>
    </ligand>
</feature>
<reference key="1">
    <citation type="journal article" date="2003" name="Nucleic Acids Res.">
        <title>Genome sequence of Chlamydophila caviae (Chlamydia psittaci GPIC): examining the role of niche-specific genes in the evolution of the Chlamydiaceae.</title>
        <authorList>
            <person name="Read T.D."/>
            <person name="Myers G.S.A."/>
            <person name="Brunham R.C."/>
            <person name="Nelson W.C."/>
            <person name="Paulsen I.T."/>
            <person name="Heidelberg J.F."/>
            <person name="Holtzapple E.K."/>
            <person name="Khouri H.M."/>
            <person name="Federova N.B."/>
            <person name="Carty H.A."/>
            <person name="Umayam L.A."/>
            <person name="Haft D.H."/>
            <person name="Peterson J.D."/>
            <person name="Beanan M.J."/>
            <person name="White O."/>
            <person name="Salzberg S.L."/>
            <person name="Hsia R.-C."/>
            <person name="McClarty G."/>
            <person name="Rank R.G."/>
            <person name="Bavoil P.M."/>
            <person name="Fraser C.M."/>
        </authorList>
    </citation>
    <scope>NUCLEOTIDE SEQUENCE [LARGE SCALE GENOMIC DNA]</scope>
    <source>
        <strain>ATCC VR-813 / DSM 19441 / 03DC25 / GPIC</strain>
    </source>
</reference>
<keyword id="KW-0067">ATP-binding</keyword>
<keyword id="KW-0289">Folate biosynthesis</keyword>
<keyword id="KW-0418">Kinase</keyword>
<keyword id="KW-0460">Magnesium</keyword>
<keyword id="KW-0479">Metal-binding</keyword>
<keyword id="KW-0511">Multifunctional enzyme</keyword>
<keyword id="KW-0547">Nucleotide-binding</keyword>
<keyword id="KW-0808">Transferase</keyword>
<name>FOLKP_CHLCV</name>
<dbReference type="EC" id="2.7.6.3"/>
<dbReference type="EC" id="2.5.1.15"/>
<dbReference type="EMBL" id="AE015925">
    <property type="protein sequence ID" value="AAP05738.1"/>
    <property type="molecule type" value="Genomic_DNA"/>
</dbReference>
<dbReference type="RefSeq" id="WP_011006951.1">
    <property type="nucleotide sequence ID" value="NC_003361.3"/>
</dbReference>
<dbReference type="SMR" id="Q821E2"/>
<dbReference type="STRING" id="227941.CCA_00999"/>
<dbReference type="KEGG" id="cca:CCA_00999"/>
<dbReference type="eggNOG" id="COG0294">
    <property type="taxonomic scope" value="Bacteria"/>
</dbReference>
<dbReference type="eggNOG" id="COG0801">
    <property type="taxonomic scope" value="Bacteria"/>
</dbReference>
<dbReference type="HOGENOM" id="CLU_008023_2_2_0"/>
<dbReference type="OrthoDB" id="9811744at2"/>
<dbReference type="UniPathway" id="UPA00077">
    <property type="reaction ID" value="UER00155"/>
</dbReference>
<dbReference type="UniPathway" id="UPA00077">
    <property type="reaction ID" value="UER00156"/>
</dbReference>
<dbReference type="Proteomes" id="UP000002193">
    <property type="component" value="Chromosome"/>
</dbReference>
<dbReference type="GO" id="GO:0005829">
    <property type="term" value="C:cytosol"/>
    <property type="evidence" value="ECO:0007669"/>
    <property type="project" value="TreeGrafter"/>
</dbReference>
<dbReference type="GO" id="GO:0003848">
    <property type="term" value="F:2-amino-4-hydroxy-6-hydroxymethyldihydropteridine diphosphokinase activity"/>
    <property type="evidence" value="ECO:0007669"/>
    <property type="project" value="UniProtKB-EC"/>
</dbReference>
<dbReference type="GO" id="GO:0005524">
    <property type="term" value="F:ATP binding"/>
    <property type="evidence" value="ECO:0007669"/>
    <property type="project" value="UniProtKB-KW"/>
</dbReference>
<dbReference type="GO" id="GO:0004156">
    <property type="term" value="F:dihydropteroate synthase activity"/>
    <property type="evidence" value="ECO:0007669"/>
    <property type="project" value="UniProtKB-EC"/>
</dbReference>
<dbReference type="GO" id="GO:0016301">
    <property type="term" value="F:kinase activity"/>
    <property type="evidence" value="ECO:0007669"/>
    <property type="project" value="UniProtKB-KW"/>
</dbReference>
<dbReference type="GO" id="GO:0046872">
    <property type="term" value="F:metal ion binding"/>
    <property type="evidence" value="ECO:0007669"/>
    <property type="project" value="UniProtKB-KW"/>
</dbReference>
<dbReference type="GO" id="GO:0046656">
    <property type="term" value="P:folic acid biosynthetic process"/>
    <property type="evidence" value="ECO:0007669"/>
    <property type="project" value="UniProtKB-KW"/>
</dbReference>
<dbReference type="GO" id="GO:0046654">
    <property type="term" value="P:tetrahydrofolate biosynthetic process"/>
    <property type="evidence" value="ECO:0007669"/>
    <property type="project" value="UniProtKB-UniPathway"/>
</dbReference>
<dbReference type="CDD" id="cd00739">
    <property type="entry name" value="DHPS"/>
    <property type="match status" value="1"/>
</dbReference>
<dbReference type="CDD" id="cd00483">
    <property type="entry name" value="HPPK"/>
    <property type="match status" value="1"/>
</dbReference>
<dbReference type="Gene3D" id="3.30.70.560">
    <property type="entry name" value="7,8-Dihydro-6-hydroxymethylpterin-pyrophosphokinase HPPK"/>
    <property type="match status" value="1"/>
</dbReference>
<dbReference type="Gene3D" id="3.20.20.20">
    <property type="entry name" value="Dihydropteroate synthase-like"/>
    <property type="match status" value="1"/>
</dbReference>
<dbReference type="InterPro" id="IPR045031">
    <property type="entry name" value="DHP_synth-like"/>
</dbReference>
<dbReference type="InterPro" id="IPR006390">
    <property type="entry name" value="DHP_synth_dom"/>
</dbReference>
<dbReference type="InterPro" id="IPR011005">
    <property type="entry name" value="Dihydropteroate_synth-like_sf"/>
</dbReference>
<dbReference type="InterPro" id="IPR000550">
    <property type="entry name" value="Hppk"/>
</dbReference>
<dbReference type="InterPro" id="IPR035907">
    <property type="entry name" value="Hppk_sf"/>
</dbReference>
<dbReference type="InterPro" id="IPR000489">
    <property type="entry name" value="Pterin-binding_dom"/>
</dbReference>
<dbReference type="NCBIfam" id="TIGR01496">
    <property type="entry name" value="DHPS"/>
    <property type="match status" value="1"/>
</dbReference>
<dbReference type="NCBIfam" id="TIGR01498">
    <property type="entry name" value="folK"/>
    <property type="match status" value="1"/>
</dbReference>
<dbReference type="PANTHER" id="PTHR20941">
    <property type="entry name" value="FOLATE SYNTHESIS PROTEINS"/>
    <property type="match status" value="1"/>
</dbReference>
<dbReference type="PANTHER" id="PTHR20941:SF1">
    <property type="entry name" value="FOLIC ACID SYNTHESIS PROTEIN FOL1"/>
    <property type="match status" value="1"/>
</dbReference>
<dbReference type="Pfam" id="PF01288">
    <property type="entry name" value="HPPK"/>
    <property type="match status" value="1"/>
</dbReference>
<dbReference type="Pfam" id="PF00809">
    <property type="entry name" value="Pterin_bind"/>
    <property type="match status" value="1"/>
</dbReference>
<dbReference type="SUPFAM" id="SSF55083">
    <property type="entry name" value="6-hydroxymethyl-7,8-dihydropterin pyrophosphokinase, HPPK"/>
    <property type="match status" value="1"/>
</dbReference>
<dbReference type="SUPFAM" id="SSF51717">
    <property type="entry name" value="Dihydropteroate synthetase-like"/>
    <property type="match status" value="1"/>
</dbReference>
<dbReference type="PROSITE" id="PS00792">
    <property type="entry name" value="DHPS_1"/>
    <property type="match status" value="1"/>
</dbReference>
<dbReference type="PROSITE" id="PS00793">
    <property type="entry name" value="DHPS_2"/>
    <property type="match status" value="1"/>
</dbReference>
<dbReference type="PROSITE" id="PS50972">
    <property type="entry name" value="PTERIN_BINDING"/>
    <property type="match status" value="1"/>
</dbReference>
<accession>Q821E2</accession>
<evidence type="ECO:0000250" key="1">
    <source>
        <dbReference type="UniProtKB" id="P0AC13"/>
    </source>
</evidence>
<evidence type="ECO:0000250" key="2">
    <source>
        <dbReference type="UniProtKB" id="P9WND1"/>
    </source>
</evidence>
<evidence type="ECO:0000255" key="3">
    <source>
        <dbReference type="PROSITE-ProRule" id="PRU00334"/>
    </source>
</evidence>
<evidence type="ECO:0000305" key="4"/>
<gene>
    <name type="primary">folKP</name>
    <name type="ordered locus">CCA_00999</name>
</gene>
<protein>
    <recommendedName>
        <fullName>Folate synthesis bifunctional protein</fullName>
    </recommendedName>
    <domain>
        <recommendedName>
            <fullName>6-hydroxymethyl-7,8-dihydropterin pyrophosphokinase</fullName>
            <shortName>HPPK</shortName>
            <ecNumber>2.7.6.3</ecNumber>
        </recommendedName>
        <alternativeName>
            <fullName>2-amino-4-hydroxy-6-hydroxymethyldihydropteridine pyrophosphokinase</fullName>
        </alternativeName>
        <alternativeName>
            <fullName>7,8-dihydro-6-hydroxymethylpterin-pyrophosphokinase</fullName>
            <shortName>PPPK</shortName>
        </alternativeName>
    </domain>
    <domain>
        <recommendedName>
            <fullName>Dihydropteroate synthase</fullName>
            <shortName>DHPS</shortName>
            <ecNumber>2.5.1.15</ecNumber>
        </recommendedName>
        <alternativeName>
            <fullName>Dihydropteroate pyrophosphorylase</fullName>
        </alternativeName>
    </domain>
</protein>
<comment type="catalytic activity">
    <reaction>
        <text>6-hydroxymethyl-7,8-dihydropterin + ATP = (7,8-dihydropterin-6-yl)methyl diphosphate + AMP + H(+)</text>
        <dbReference type="Rhea" id="RHEA:11412"/>
        <dbReference type="ChEBI" id="CHEBI:15378"/>
        <dbReference type="ChEBI" id="CHEBI:30616"/>
        <dbReference type="ChEBI" id="CHEBI:44841"/>
        <dbReference type="ChEBI" id="CHEBI:72950"/>
        <dbReference type="ChEBI" id="CHEBI:456215"/>
        <dbReference type="EC" id="2.7.6.3"/>
    </reaction>
</comment>
<comment type="catalytic activity">
    <reaction>
        <text>(7,8-dihydropterin-6-yl)methyl diphosphate + 4-aminobenzoate = 7,8-dihydropteroate + diphosphate</text>
        <dbReference type="Rhea" id="RHEA:19949"/>
        <dbReference type="ChEBI" id="CHEBI:17836"/>
        <dbReference type="ChEBI" id="CHEBI:17839"/>
        <dbReference type="ChEBI" id="CHEBI:33019"/>
        <dbReference type="ChEBI" id="CHEBI:72950"/>
        <dbReference type="EC" id="2.5.1.15"/>
    </reaction>
</comment>
<comment type="cofactor">
    <cofactor evidence="1">
        <name>Mg(2+)</name>
        <dbReference type="ChEBI" id="CHEBI:18420"/>
    </cofactor>
</comment>
<comment type="pathway">
    <text>Cofactor biosynthesis; tetrahydrofolate biosynthesis; 2-amino-4-hydroxy-6-hydroxymethyl-7,8-dihydropteridine diphosphate from 7,8-dihydroneopterin triphosphate: step 4/4.</text>
</comment>
<comment type="pathway">
    <text>Cofactor biosynthesis; tetrahydrofolate biosynthesis; 7,8-dihydrofolate from 2-amino-4-hydroxy-6-hydroxymethyl-7,8-dihydropteridine diphosphate and 4-aminobenzoate: step 1/2.</text>
</comment>
<comment type="similarity">
    <text evidence="4">In the C-terminal section; belongs to the DHPS family.</text>
</comment>
<comment type="similarity">
    <text evidence="4">In the N-terminal section; belongs to the HPPK family.</text>
</comment>